<feature type="chain" id="PRO_1000054783" description="Small ribosomal subunit protein uS15">
    <location>
        <begin position="1"/>
        <end position="88"/>
    </location>
</feature>
<comment type="function">
    <text evidence="1">One of the primary rRNA binding proteins, it binds directly to 16S rRNA where it helps nucleate assembly of the platform of the 30S subunit by binding and bridging several RNA helices of the 16S rRNA.</text>
</comment>
<comment type="function">
    <text evidence="1">Forms an intersubunit bridge (bridge B4) with the 23S rRNA of the 50S subunit in the ribosome.</text>
</comment>
<comment type="subunit">
    <text evidence="1">Part of the 30S ribosomal subunit. Forms a bridge to the 50S subunit in the 70S ribosome, contacting the 23S rRNA.</text>
</comment>
<comment type="similarity">
    <text evidence="1">Belongs to the universal ribosomal protein uS15 family.</text>
</comment>
<reference key="1">
    <citation type="journal article" date="2007" name="PLoS ONE">
        <title>Genome sequencing shows that European isolates of Francisella tularensis subspecies tularensis are almost identical to US laboratory strain Schu S4.</title>
        <authorList>
            <person name="Chaudhuri R.R."/>
            <person name="Ren C.-P."/>
            <person name="Desmond L."/>
            <person name="Vincent G.A."/>
            <person name="Silman N.J."/>
            <person name="Brehm J.K."/>
            <person name="Elmore M.J."/>
            <person name="Hudson M.J."/>
            <person name="Forsman M."/>
            <person name="Isherwood K.E."/>
            <person name="Gurycova D."/>
            <person name="Minton N.P."/>
            <person name="Titball R.W."/>
            <person name="Pallen M.J."/>
            <person name="Vipond R."/>
        </authorList>
    </citation>
    <scope>NUCLEOTIDE SEQUENCE [LARGE SCALE GENOMIC DNA]</scope>
    <source>
        <strain>FSC 198</strain>
    </source>
</reference>
<sequence>MLTAQDKQKIIKENQLAESDTGSPEVQVALLTARINDLQGHFEAHKKDNHSRRGLLRLVSQRRKLLDYLHDKDVERYRSLIKKLNIRR</sequence>
<organism>
    <name type="scientific">Francisella tularensis subsp. tularensis (strain FSC 198)</name>
    <dbReference type="NCBI Taxonomy" id="393115"/>
    <lineage>
        <taxon>Bacteria</taxon>
        <taxon>Pseudomonadati</taxon>
        <taxon>Pseudomonadota</taxon>
        <taxon>Gammaproteobacteria</taxon>
        <taxon>Thiotrichales</taxon>
        <taxon>Francisellaceae</taxon>
        <taxon>Francisella</taxon>
    </lineage>
</organism>
<proteinExistence type="inferred from homology"/>
<keyword id="KW-0687">Ribonucleoprotein</keyword>
<keyword id="KW-0689">Ribosomal protein</keyword>
<keyword id="KW-0694">RNA-binding</keyword>
<keyword id="KW-0699">rRNA-binding</keyword>
<accession>Q14ID0</accession>
<dbReference type="EMBL" id="AM286280">
    <property type="protein sequence ID" value="CAL08714.1"/>
    <property type="molecule type" value="Genomic_DNA"/>
</dbReference>
<dbReference type="RefSeq" id="WP_003020499.1">
    <property type="nucleotide sequence ID" value="NC_008245.1"/>
</dbReference>
<dbReference type="SMR" id="Q14ID0"/>
<dbReference type="KEGG" id="ftf:FTF0698"/>
<dbReference type="HOGENOM" id="CLU_148518_0_0_6"/>
<dbReference type="GO" id="GO:0022627">
    <property type="term" value="C:cytosolic small ribosomal subunit"/>
    <property type="evidence" value="ECO:0007669"/>
    <property type="project" value="TreeGrafter"/>
</dbReference>
<dbReference type="GO" id="GO:0019843">
    <property type="term" value="F:rRNA binding"/>
    <property type="evidence" value="ECO:0007669"/>
    <property type="project" value="UniProtKB-UniRule"/>
</dbReference>
<dbReference type="GO" id="GO:0003735">
    <property type="term" value="F:structural constituent of ribosome"/>
    <property type="evidence" value="ECO:0007669"/>
    <property type="project" value="InterPro"/>
</dbReference>
<dbReference type="GO" id="GO:0006412">
    <property type="term" value="P:translation"/>
    <property type="evidence" value="ECO:0007669"/>
    <property type="project" value="UniProtKB-UniRule"/>
</dbReference>
<dbReference type="CDD" id="cd00353">
    <property type="entry name" value="Ribosomal_S15p_S13e"/>
    <property type="match status" value="1"/>
</dbReference>
<dbReference type="FunFam" id="1.10.287.10:FF:000002">
    <property type="entry name" value="30S ribosomal protein S15"/>
    <property type="match status" value="1"/>
</dbReference>
<dbReference type="Gene3D" id="6.10.250.3130">
    <property type="match status" value="1"/>
</dbReference>
<dbReference type="Gene3D" id="1.10.287.10">
    <property type="entry name" value="S15/NS1, RNA-binding"/>
    <property type="match status" value="1"/>
</dbReference>
<dbReference type="HAMAP" id="MF_01343_B">
    <property type="entry name" value="Ribosomal_uS15_B"/>
    <property type="match status" value="1"/>
</dbReference>
<dbReference type="InterPro" id="IPR000589">
    <property type="entry name" value="Ribosomal_uS15"/>
</dbReference>
<dbReference type="InterPro" id="IPR005290">
    <property type="entry name" value="Ribosomal_uS15_bac-type"/>
</dbReference>
<dbReference type="InterPro" id="IPR009068">
    <property type="entry name" value="uS15_NS1_RNA-bd_sf"/>
</dbReference>
<dbReference type="NCBIfam" id="TIGR00952">
    <property type="entry name" value="S15_bact"/>
    <property type="match status" value="1"/>
</dbReference>
<dbReference type="PANTHER" id="PTHR23321">
    <property type="entry name" value="RIBOSOMAL PROTEIN S15, BACTERIAL AND ORGANELLAR"/>
    <property type="match status" value="1"/>
</dbReference>
<dbReference type="PANTHER" id="PTHR23321:SF26">
    <property type="entry name" value="SMALL RIBOSOMAL SUBUNIT PROTEIN US15M"/>
    <property type="match status" value="1"/>
</dbReference>
<dbReference type="Pfam" id="PF00312">
    <property type="entry name" value="Ribosomal_S15"/>
    <property type="match status" value="1"/>
</dbReference>
<dbReference type="SMART" id="SM01387">
    <property type="entry name" value="Ribosomal_S15"/>
    <property type="match status" value="1"/>
</dbReference>
<dbReference type="SUPFAM" id="SSF47060">
    <property type="entry name" value="S15/NS1 RNA-binding domain"/>
    <property type="match status" value="1"/>
</dbReference>
<dbReference type="PROSITE" id="PS00362">
    <property type="entry name" value="RIBOSOMAL_S15"/>
    <property type="match status" value="1"/>
</dbReference>
<protein>
    <recommendedName>
        <fullName evidence="1">Small ribosomal subunit protein uS15</fullName>
    </recommendedName>
    <alternativeName>
        <fullName evidence="2">30S ribosomal protein S15</fullName>
    </alternativeName>
</protein>
<gene>
    <name evidence="1" type="primary">rpsO</name>
    <name type="ordered locus">FTF0698</name>
</gene>
<name>RS15_FRAT1</name>
<evidence type="ECO:0000255" key="1">
    <source>
        <dbReference type="HAMAP-Rule" id="MF_01343"/>
    </source>
</evidence>
<evidence type="ECO:0000305" key="2"/>